<organism>
    <name type="scientific">Salmonella enteritidis PT4 (strain P125109)</name>
    <dbReference type="NCBI Taxonomy" id="550537"/>
    <lineage>
        <taxon>Bacteria</taxon>
        <taxon>Pseudomonadati</taxon>
        <taxon>Pseudomonadota</taxon>
        <taxon>Gammaproteobacteria</taxon>
        <taxon>Enterobacterales</taxon>
        <taxon>Enterobacteriaceae</taxon>
        <taxon>Salmonella</taxon>
    </lineage>
</organism>
<dbReference type="EC" id="2.5.1.16" evidence="1"/>
<dbReference type="EMBL" id="AM933172">
    <property type="protein sequence ID" value="CAR31759.1"/>
    <property type="molecule type" value="Genomic_DNA"/>
</dbReference>
<dbReference type="RefSeq" id="WP_000829968.1">
    <property type="nucleotide sequence ID" value="NC_011294.1"/>
</dbReference>
<dbReference type="SMR" id="B5R2R5"/>
<dbReference type="KEGG" id="set:SEN0171"/>
<dbReference type="HOGENOM" id="CLU_048199_0_0_6"/>
<dbReference type="UniPathway" id="UPA00248">
    <property type="reaction ID" value="UER00314"/>
</dbReference>
<dbReference type="Proteomes" id="UP000000613">
    <property type="component" value="Chromosome"/>
</dbReference>
<dbReference type="GO" id="GO:0005829">
    <property type="term" value="C:cytosol"/>
    <property type="evidence" value="ECO:0007669"/>
    <property type="project" value="TreeGrafter"/>
</dbReference>
<dbReference type="GO" id="GO:0004766">
    <property type="term" value="F:spermidine synthase activity"/>
    <property type="evidence" value="ECO:0007669"/>
    <property type="project" value="UniProtKB-UniRule"/>
</dbReference>
<dbReference type="GO" id="GO:0008295">
    <property type="term" value="P:spermidine biosynthetic process"/>
    <property type="evidence" value="ECO:0007669"/>
    <property type="project" value="UniProtKB-UniRule"/>
</dbReference>
<dbReference type="CDD" id="cd02440">
    <property type="entry name" value="AdoMet_MTases"/>
    <property type="match status" value="1"/>
</dbReference>
<dbReference type="FunFam" id="2.30.140.10:FF:000002">
    <property type="entry name" value="Polyamine aminopropyltransferase"/>
    <property type="match status" value="1"/>
</dbReference>
<dbReference type="FunFam" id="3.40.50.150:FF:000026">
    <property type="entry name" value="Polyamine aminopropyltransferase"/>
    <property type="match status" value="1"/>
</dbReference>
<dbReference type="Gene3D" id="2.30.140.10">
    <property type="entry name" value="Spermidine synthase, tetramerisation domain"/>
    <property type="match status" value="1"/>
</dbReference>
<dbReference type="Gene3D" id="3.40.50.150">
    <property type="entry name" value="Vaccinia Virus protein VP39"/>
    <property type="match status" value="1"/>
</dbReference>
<dbReference type="HAMAP" id="MF_00198">
    <property type="entry name" value="Spermidine_synth"/>
    <property type="match status" value="1"/>
</dbReference>
<dbReference type="InterPro" id="IPR030374">
    <property type="entry name" value="PABS"/>
</dbReference>
<dbReference type="InterPro" id="IPR030373">
    <property type="entry name" value="PABS_CS"/>
</dbReference>
<dbReference type="InterPro" id="IPR029063">
    <property type="entry name" value="SAM-dependent_MTases_sf"/>
</dbReference>
<dbReference type="InterPro" id="IPR001045">
    <property type="entry name" value="Spermi_synthase"/>
</dbReference>
<dbReference type="InterPro" id="IPR035246">
    <property type="entry name" value="Spermidine_synt_N"/>
</dbReference>
<dbReference type="InterPro" id="IPR037163">
    <property type="entry name" value="Spermidine_synt_N_sf"/>
</dbReference>
<dbReference type="NCBIfam" id="NF037959">
    <property type="entry name" value="MFS_SpdSyn"/>
    <property type="match status" value="1"/>
</dbReference>
<dbReference type="NCBIfam" id="NF002010">
    <property type="entry name" value="PRK00811.1"/>
    <property type="match status" value="1"/>
</dbReference>
<dbReference type="NCBIfam" id="TIGR00417">
    <property type="entry name" value="speE"/>
    <property type="match status" value="1"/>
</dbReference>
<dbReference type="PANTHER" id="PTHR11558:SF11">
    <property type="entry name" value="SPERMIDINE SYNTHASE"/>
    <property type="match status" value="1"/>
</dbReference>
<dbReference type="PANTHER" id="PTHR11558">
    <property type="entry name" value="SPERMIDINE/SPERMINE SYNTHASE"/>
    <property type="match status" value="1"/>
</dbReference>
<dbReference type="Pfam" id="PF17284">
    <property type="entry name" value="Spermine_synt_N"/>
    <property type="match status" value="1"/>
</dbReference>
<dbReference type="Pfam" id="PF01564">
    <property type="entry name" value="Spermine_synth"/>
    <property type="match status" value="1"/>
</dbReference>
<dbReference type="SUPFAM" id="SSF53335">
    <property type="entry name" value="S-adenosyl-L-methionine-dependent methyltransferases"/>
    <property type="match status" value="1"/>
</dbReference>
<dbReference type="PROSITE" id="PS01330">
    <property type="entry name" value="PABS_1"/>
    <property type="match status" value="1"/>
</dbReference>
<dbReference type="PROSITE" id="PS51006">
    <property type="entry name" value="PABS_2"/>
    <property type="match status" value="1"/>
</dbReference>
<gene>
    <name evidence="1" type="primary">speE</name>
    <name type="ordered locus">SEN0171</name>
</gene>
<evidence type="ECO:0000255" key="1">
    <source>
        <dbReference type="HAMAP-Rule" id="MF_00198"/>
    </source>
</evidence>
<name>SPEE_SALEP</name>
<accession>B5R2R5</accession>
<feature type="chain" id="PRO_1000099295" description="Polyamine aminopropyltransferase">
    <location>
        <begin position="1"/>
        <end position="286"/>
    </location>
</feature>
<feature type="domain" description="PABS" evidence="1">
    <location>
        <begin position="5"/>
        <end position="238"/>
    </location>
</feature>
<feature type="active site" description="Proton acceptor" evidence="1">
    <location>
        <position position="158"/>
    </location>
</feature>
<feature type="binding site" evidence="1">
    <location>
        <position position="33"/>
    </location>
    <ligand>
        <name>S-methyl-5'-thioadenosine</name>
        <dbReference type="ChEBI" id="CHEBI:17509"/>
    </ligand>
</feature>
<feature type="binding site" evidence="1">
    <location>
        <position position="64"/>
    </location>
    <ligand>
        <name>spermidine</name>
        <dbReference type="ChEBI" id="CHEBI:57834"/>
    </ligand>
</feature>
<feature type="binding site" evidence="1">
    <location>
        <position position="88"/>
    </location>
    <ligand>
        <name>spermidine</name>
        <dbReference type="ChEBI" id="CHEBI:57834"/>
    </ligand>
</feature>
<feature type="binding site" evidence="1">
    <location>
        <position position="108"/>
    </location>
    <ligand>
        <name>S-methyl-5'-thioadenosine</name>
        <dbReference type="ChEBI" id="CHEBI:17509"/>
    </ligand>
</feature>
<feature type="binding site" evidence="1">
    <location>
        <begin position="140"/>
        <end position="141"/>
    </location>
    <ligand>
        <name>S-methyl-5'-thioadenosine</name>
        <dbReference type="ChEBI" id="CHEBI:17509"/>
    </ligand>
</feature>
<feature type="binding site" evidence="1">
    <location>
        <begin position="158"/>
        <end position="161"/>
    </location>
    <ligand>
        <name>spermidine</name>
        <dbReference type="ChEBI" id="CHEBI:57834"/>
    </ligand>
</feature>
<feature type="binding site" evidence="1">
    <location>
        <position position="165"/>
    </location>
    <ligand>
        <name>S-methyl-5'-thioadenosine</name>
        <dbReference type="ChEBI" id="CHEBI:17509"/>
    </ligand>
</feature>
<sequence length="286" mass="32095">MAENTMWHETLHDQFGQYFAVDNVLYHEKTDHQDLIIFENAAFGRVMALDGVVQTTERDEFIYHEMMTHVPLLAHGHAKHVLIIGGGDGAMLREVTRHKNVETITMVEIDAGVVSFCRQYLPNHNAGSYDDPRFTLVIDDGVNFVNQTHQTFDVIISDCTDPIGPGESLFTSAFYEGCKRCLNPGGIFVAQNGVCFLQQDEALDSHRKLSHYFSDVGFYQAAIPTYYGGIMTFAWATDNDALRHLSSEIIQARFHAAGLKCRYYNPAIHAAAFALPQYLHDALSAQ</sequence>
<protein>
    <recommendedName>
        <fullName evidence="1">Polyamine aminopropyltransferase</fullName>
    </recommendedName>
    <alternativeName>
        <fullName evidence="1">Putrescine aminopropyltransferase</fullName>
        <shortName evidence="1">PAPT</shortName>
    </alternativeName>
    <alternativeName>
        <fullName evidence="1">Spermidine synthase</fullName>
        <shortName evidence="1">SPDS</shortName>
        <shortName evidence="1">SPDSY</shortName>
        <ecNumber evidence="1">2.5.1.16</ecNumber>
    </alternativeName>
</protein>
<comment type="function">
    <text evidence="1">Catalyzes the irreversible transfer of a propylamine group from the amino donor S-adenosylmethioninamine (decarboxy-AdoMet) to putrescine (1,4-diaminobutane) to yield spermidine.</text>
</comment>
<comment type="catalytic activity">
    <reaction evidence="1">
        <text>S-adenosyl 3-(methylsulfanyl)propylamine + putrescine = S-methyl-5'-thioadenosine + spermidine + H(+)</text>
        <dbReference type="Rhea" id="RHEA:12721"/>
        <dbReference type="ChEBI" id="CHEBI:15378"/>
        <dbReference type="ChEBI" id="CHEBI:17509"/>
        <dbReference type="ChEBI" id="CHEBI:57443"/>
        <dbReference type="ChEBI" id="CHEBI:57834"/>
        <dbReference type="ChEBI" id="CHEBI:326268"/>
        <dbReference type="EC" id="2.5.1.16"/>
    </reaction>
</comment>
<comment type="pathway">
    <text evidence="1">Amine and polyamine biosynthesis; spermidine biosynthesis; spermidine from putrescine: step 1/1.</text>
</comment>
<comment type="subunit">
    <text evidence="1">Homodimer or homotetramer.</text>
</comment>
<comment type="subcellular location">
    <subcellularLocation>
        <location evidence="1">Cytoplasm</location>
    </subcellularLocation>
</comment>
<comment type="similarity">
    <text evidence="1">Belongs to the spermidine/spermine synthase family.</text>
</comment>
<proteinExistence type="inferred from homology"/>
<reference key="1">
    <citation type="journal article" date="2008" name="Genome Res.">
        <title>Comparative genome analysis of Salmonella enteritidis PT4 and Salmonella gallinarum 287/91 provides insights into evolutionary and host adaptation pathways.</title>
        <authorList>
            <person name="Thomson N.R."/>
            <person name="Clayton D.J."/>
            <person name="Windhorst D."/>
            <person name="Vernikos G."/>
            <person name="Davidson S."/>
            <person name="Churcher C."/>
            <person name="Quail M.A."/>
            <person name="Stevens M."/>
            <person name="Jones M.A."/>
            <person name="Watson M."/>
            <person name="Barron A."/>
            <person name="Layton A."/>
            <person name="Pickard D."/>
            <person name="Kingsley R.A."/>
            <person name="Bignell A."/>
            <person name="Clark L."/>
            <person name="Harris B."/>
            <person name="Ormond D."/>
            <person name="Abdellah Z."/>
            <person name="Brooks K."/>
            <person name="Cherevach I."/>
            <person name="Chillingworth T."/>
            <person name="Woodward J."/>
            <person name="Norberczak H."/>
            <person name="Lord A."/>
            <person name="Arrowsmith C."/>
            <person name="Jagels K."/>
            <person name="Moule S."/>
            <person name="Mungall K."/>
            <person name="Saunders M."/>
            <person name="Whitehead S."/>
            <person name="Chabalgoity J.A."/>
            <person name="Maskell D."/>
            <person name="Humphreys T."/>
            <person name="Roberts M."/>
            <person name="Barrow P.A."/>
            <person name="Dougan G."/>
            <person name="Parkhill J."/>
        </authorList>
    </citation>
    <scope>NUCLEOTIDE SEQUENCE [LARGE SCALE GENOMIC DNA]</scope>
    <source>
        <strain>P125109</strain>
    </source>
</reference>
<keyword id="KW-0963">Cytoplasm</keyword>
<keyword id="KW-0620">Polyamine biosynthesis</keyword>
<keyword id="KW-0745">Spermidine biosynthesis</keyword>
<keyword id="KW-0808">Transferase</keyword>